<name>KAD_STRZJ</name>
<sequence length="212" mass="23721">MNLLIMGLPGAGKGTQAAKIVEQFHVAHISTGDMFRAAMANQTEMGVLAKSYIDKGELVPDEVTNGIVKERLSQDDIKETGFLLDGYPRTIEQAHALDKTLAELGIELEGIINIEVNPDSLLERLSGRIIHRVTGETFHKVFNPPVDYKEEDYYQREDDKPETVKRRLDVNIAQGEPIIAHYRAKGLVHDIEGNQDINDVFSDIEKVLTNLK</sequence>
<protein>
    <recommendedName>
        <fullName evidence="1">Adenylate kinase</fullName>
        <shortName evidence="1">AK</shortName>
        <ecNumber evidence="1">2.7.4.3</ecNumber>
    </recommendedName>
    <alternativeName>
        <fullName evidence="1">ATP-AMP transphosphorylase</fullName>
    </alternativeName>
    <alternativeName>
        <fullName evidence="1">ATP:AMP phosphotransferase</fullName>
    </alternativeName>
    <alternativeName>
        <fullName evidence="1">Adenylate monophosphate kinase</fullName>
    </alternativeName>
</protein>
<feature type="chain" id="PRO_1000191170" description="Adenylate kinase">
    <location>
        <begin position="1"/>
        <end position="212"/>
    </location>
</feature>
<feature type="region of interest" description="NMP" evidence="1">
    <location>
        <begin position="30"/>
        <end position="59"/>
    </location>
</feature>
<feature type="region of interest" description="LID" evidence="1">
    <location>
        <begin position="127"/>
        <end position="159"/>
    </location>
</feature>
<feature type="binding site" evidence="1">
    <location>
        <begin position="10"/>
        <end position="15"/>
    </location>
    <ligand>
        <name>ATP</name>
        <dbReference type="ChEBI" id="CHEBI:30616"/>
    </ligand>
</feature>
<feature type="binding site" evidence="1">
    <location>
        <position position="31"/>
    </location>
    <ligand>
        <name>AMP</name>
        <dbReference type="ChEBI" id="CHEBI:456215"/>
    </ligand>
</feature>
<feature type="binding site" evidence="1">
    <location>
        <position position="36"/>
    </location>
    <ligand>
        <name>AMP</name>
        <dbReference type="ChEBI" id="CHEBI:456215"/>
    </ligand>
</feature>
<feature type="binding site" evidence="1">
    <location>
        <begin position="57"/>
        <end position="59"/>
    </location>
    <ligand>
        <name>AMP</name>
        <dbReference type="ChEBI" id="CHEBI:456215"/>
    </ligand>
</feature>
<feature type="binding site" evidence="1">
    <location>
        <begin position="86"/>
        <end position="89"/>
    </location>
    <ligand>
        <name>AMP</name>
        <dbReference type="ChEBI" id="CHEBI:456215"/>
    </ligand>
</feature>
<feature type="binding site" evidence="1">
    <location>
        <position position="93"/>
    </location>
    <ligand>
        <name>AMP</name>
        <dbReference type="ChEBI" id="CHEBI:456215"/>
    </ligand>
</feature>
<feature type="binding site" evidence="1">
    <location>
        <position position="128"/>
    </location>
    <ligand>
        <name>ATP</name>
        <dbReference type="ChEBI" id="CHEBI:30616"/>
    </ligand>
</feature>
<feature type="binding site" evidence="1">
    <location>
        <begin position="137"/>
        <end position="138"/>
    </location>
    <ligand>
        <name>ATP</name>
        <dbReference type="ChEBI" id="CHEBI:30616"/>
    </ligand>
</feature>
<feature type="binding site" evidence="1">
    <location>
        <position position="156"/>
    </location>
    <ligand>
        <name>AMP</name>
        <dbReference type="ChEBI" id="CHEBI:456215"/>
    </ligand>
</feature>
<feature type="binding site" evidence="1">
    <location>
        <position position="167"/>
    </location>
    <ligand>
        <name>AMP</name>
        <dbReference type="ChEBI" id="CHEBI:456215"/>
    </ligand>
</feature>
<feature type="binding site" evidence="1">
    <location>
        <position position="195"/>
    </location>
    <ligand>
        <name>ATP</name>
        <dbReference type="ChEBI" id="CHEBI:30616"/>
    </ligand>
</feature>
<dbReference type="EC" id="2.7.4.3" evidence="1"/>
<dbReference type="EMBL" id="CP000919">
    <property type="protein sequence ID" value="ACO19089.1"/>
    <property type="molecule type" value="Genomic_DNA"/>
</dbReference>
<dbReference type="RefSeq" id="WP_001050431.1">
    <property type="nucleotide sequence ID" value="NC_012466.1"/>
</dbReference>
<dbReference type="SMR" id="C1CC27"/>
<dbReference type="KEGG" id="sjj:SPJ_0240"/>
<dbReference type="HOGENOM" id="CLU_032354_1_2_9"/>
<dbReference type="UniPathway" id="UPA00588">
    <property type="reaction ID" value="UER00649"/>
</dbReference>
<dbReference type="Proteomes" id="UP000002206">
    <property type="component" value="Chromosome"/>
</dbReference>
<dbReference type="GO" id="GO:0005737">
    <property type="term" value="C:cytoplasm"/>
    <property type="evidence" value="ECO:0007669"/>
    <property type="project" value="UniProtKB-SubCell"/>
</dbReference>
<dbReference type="GO" id="GO:0004017">
    <property type="term" value="F:adenylate kinase activity"/>
    <property type="evidence" value="ECO:0007669"/>
    <property type="project" value="UniProtKB-UniRule"/>
</dbReference>
<dbReference type="GO" id="GO:0005524">
    <property type="term" value="F:ATP binding"/>
    <property type="evidence" value="ECO:0007669"/>
    <property type="project" value="UniProtKB-UniRule"/>
</dbReference>
<dbReference type="GO" id="GO:0044209">
    <property type="term" value="P:AMP salvage"/>
    <property type="evidence" value="ECO:0007669"/>
    <property type="project" value="UniProtKB-UniRule"/>
</dbReference>
<dbReference type="CDD" id="cd01428">
    <property type="entry name" value="ADK"/>
    <property type="match status" value="1"/>
</dbReference>
<dbReference type="FunFam" id="3.40.50.300:FF:000106">
    <property type="entry name" value="Adenylate kinase mitochondrial"/>
    <property type="match status" value="1"/>
</dbReference>
<dbReference type="Gene3D" id="3.40.50.300">
    <property type="entry name" value="P-loop containing nucleotide triphosphate hydrolases"/>
    <property type="match status" value="1"/>
</dbReference>
<dbReference type="HAMAP" id="MF_00235">
    <property type="entry name" value="Adenylate_kinase_Adk"/>
    <property type="match status" value="1"/>
</dbReference>
<dbReference type="InterPro" id="IPR006259">
    <property type="entry name" value="Adenyl_kin_sub"/>
</dbReference>
<dbReference type="InterPro" id="IPR000850">
    <property type="entry name" value="Adenylat/UMP-CMP_kin"/>
</dbReference>
<dbReference type="InterPro" id="IPR033690">
    <property type="entry name" value="Adenylat_kinase_CS"/>
</dbReference>
<dbReference type="InterPro" id="IPR027417">
    <property type="entry name" value="P-loop_NTPase"/>
</dbReference>
<dbReference type="NCBIfam" id="TIGR01351">
    <property type="entry name" value="adk"/>
    <property type="match status" value="1"/>
</dbReference>
<dbReference type="NCBIfam" id="NF001380">
    <property type="entry name" value="PRK00279.1-2"/>
    <property type="match status" value="1"/>
</dbReference>
<dbReference type="NCBIfam" id="NF001381">
    <property type="entry name" value="PRK00279.1-3"/>
    <property type="match status" value="1"/>
</dbReference>
<dbReference type="NCBIfam" id="NF001382">
    <property type="entry name" value="PRK00279.1-4"/>
    <property type="match status" value="1"/>
</dbReference>
<dbReference type="NCBIfam" id="NF011100">
    <property type="entry name" value="PRK14527.1"/>
    <property type="match status" value="1"/>
</dbReference>
<dbReference type="PANTHER" id="PTHR23359">
    <property type="entry name" value="NUCLEOTIDE KINASE"/>
    <property type="match status" value="1"/>
</dbReference>
<dbReference type="Pfam" id="PF00406">
    <property type="entry name" value="ADK"/>
    <property type="match status" value="1"/>
</dbReference>
<dbReference type="PRINTS" id="PR00094">
    <property type="entry name" value="ADENYLTKNASE"/>
</dbReference>
<dbReference type="SUPFAM" id="SSF52540">
    <property type="entry name" value="P-loop containing nucleoside triphosphate hydrolases"/>
    <property type="match status" value="1"/>
</dbReference>
<dbReference type="PROSITE" id="PS00113">
    <property type="entry name" value="ADENYLATE_KINASE"/>
    <property type="match status" value="1"/>
</dbReference>
<gene>
    <name evidence="1" type="primary">adk</name>
    <name type="ordered locus">SPJ_0240</name>
</gene>
<organism>
    <name type="scientific">Streptococcus pneumoniae (strain JJA)</name>
    <dbReference type="NCBI Taxonomy" id="488222"/>
    <lineage>
        <taxon>Bacteria</taxon>
        <taxon>Bacillati</taxon>
        <taxon>Bacillota</taxon>
        <taxon>Bacilli</taxon>
        <taxon>Lactobacillales</taxon>
        <taxon>Streptococcaceae</taxon>
        <taxon>Streptococcus</taxon>
    </lineage>
</organism>
<keyword id="KW-0067">ATP-binding</keyword>
<keyword id="KW-0963">Cytoplasm</keyword>
<keyword id="KW-0418">Kinase</keyword>
<keyword id="KW-0545">Nucleotide biosynthesis</keyword>
<keyword id="KW-0547">Nucleotide-binding</keyword>
<keyword id="KW-0808">Transferase</keyword>
<proteinExistence type="inferred from homology"/>
<reference key="1">
    <citation type="journal article" date="2010" name="Genome Biol.">
        <title>Structure and dynamics of the pan-genome of Streptococcus pneumoniae and closely related species.</title>
        <authorList>
            <person name="Donati C."/>
            <person name="Hiller N.L."/>
            <person name="Tettelin H."/>
            <person name="Muzzi A."/>
            <person name="Croucher N.J."/>
            <person name="Angiuoli S.V."/>
            <person name="Oggioni M."/>
            <person name="Dunning Hotopp J.C."/>
            <person name="Hu F.Z."/>
            <person name="Riley D.R."/>
            <person name="Covacci A."/>
            <person name="Mitchell T.J."/>
            <person name="Bentley S.D."/>
            <person name="Kilian M."/>
            <person name="Ehrlich G.D."/>
            <person name="Rappuoli R."/>
            <person name="Moxon E.R."/>
            <person name="Masignani V."/>
        </authorList>
    </citation>
    <scope>NUCLEOTIDE SEQUENCE [LARGE SCALE GENOMIC DNA]</scope>
    <source>
        <strain>JJA</strain>
    </source>
</reference>
<evidence type="ECO:0000255" key="1">
    <source>
        <dbReference type="HAMAP-Rule" id="MF_00235"/>
    </source>
</evidence>
<comment type="function">
    <text evidence="1">Catalyzes the reversible transfer of the terminal phosphate group between ATP and AMP. Plays an important role in cellular energy homeostasis and in adenine nucleotide metabolism.</text>
</comment>
<comment type="catalytic activity">
    <reaction evidence="1">
        <text>AMP + ATP = 2 ADP</text>
        <dbReference type="Rhea" id="RHEA:12973"/>
        <dbReference type="ChEBI" id="CHEBI:30616"/>
        <dbReference type="ChEBI" id="CHEBI:456215"/>
        <dbReference type="ChEBI" id="CHEBI:456216"/>
        <dbReference type="EC" id="2.7.4.3"/>
    </reaction>
</comment>
<comment type="pathway">
    <text evidence="1">Purine metabolism; AMP biosynthesis via salvage pathway; AMP from ADP: step 1/1.</text>
</comment>
<comment type="subunit">
    <text evidence="1">Monomer.</text>
</comment>
<comment type="subcellular location">
    <subcellularLocation>
        <location evidence="1">Cytoplasm</location>
    </subcellularLocation>
</comment>
<comment type="domain">
    <text evidence="1">Consists of three domains, a large central CORE domain and two small peripheral domains, NMPbind and LID, which undergo movements during catalysis. The LID domain closes over the site of phosphoryl transfer upon ATP binding. Assembling and dissambling the active center during each catalytic cycle provides an effective means to prevent ATP hydrolysis.</text>
</comment>
<comment type="similarity">
    <text evidence="1">Belongs to the adenylate kinase family.</text>
</comment>
<accession>C1CC27</accession>